<feature type="chain" id="PRO_1000190423" description="Integration host factor subunit alpha">
    <location>
        <begin position="1"/>
        <end position="99"/>
    </location>
</feature>
<feature type="region of interest" description="Disordered" evidence="2">
    <location>
        <begin position="49"/>
        <end position="73"/>
    </location>
</feature>
<organism>
    <name type="scientific">Escherichia coli O127:H6 (strain E2348/69 / EPEC)</name>
    <dbReference type="NCBI Taxonomy" id="574521"/>
    <lineage>
        <taxon>Bacteria</taxon>
        <taxon>Pseudomonadati</taxon>
        <taxon>Pseudomonadota</taxon>
        <taxon>Gammaproteobacteria</taxon>
        <taxon>Enterobacterales</taxon>
        <taxon>Enterobacteriaceae</taxon>
        <taxon>Escherichia</taxon>
    </lineage>
</organism>
<gene>
    <name evidence="1" type="primary">ihfA</name>
    <name evidence="1" type="synonym">himA</name>
    <name type="ordered locus">E2348C_1841</name>
</gene>
<accession>B7US95</accession>
<protein>
    <recommendedName>
        <fullName evidence="1">Integration host factor subunit alpha</fullName>
        <shortName evidence="1">IHF-alpha</shortName>
    </recommendedName>
</protein>
<dbReference type="EMBL" id="FM180568">
    <property type="protein sequence ID" value="CAS09389.1"/>
    <property type="molecule type" value="Genomic_DNA"/>
</dbReference>
<dbReference type="RefSeq" id="WP_001229265.1">
    <property type="nucleotide sequence ID" value="NC_011601.1"/>
</dbReference>
<dbReference type="SMR" id="B7US95"/>
<dbReference type="GeneID" id="93775925"/>
<dbReference type="KEGG" id="ecg:E2348C_1841"/>
<dbReference type="HOGENOM" id="CLU_105066_1_3_6"/>
<dbReference type="Proteomes" id="UP000008205">
    <property type="component" value="Chromosome"/>
</dbReference>
<dbReference type="GO" id="GO:0005829">
    <property type="term" value="C:cytosol"/>
    <property type="evidence" value="ECO:0007669"/>
    <property type="project" value="TreeGrafter"/>
</dbReference>
<dbReference type="GO" id="GO:0003677">
    <property type="term" value="F:DNA binding"/>
    <property type="evidence" value="ECO:0007669"/>
    <property type="project" value="UniProtKB-UniRule"/>
</dbReference>
<dbReference type="GO" id="GO:0030527">
    <property type="term" value="F:structural constituent of chromatin"/>
    <property type="evidence" value="ECO:0007669"/>
    <property type="project" value="InterPro"/>
</dbReference>
<dbReference type="GO" id="GO:0006310">
    <property type="term" value="P:DNA recombination"/>
    <property type="evidence" value="ECO:0007669"/>
    <property type="project" value="UniProtKB-UniRule"/>
</dbReference>
<dbReference type="GO" id="GO:0009893">
    <property type="term" value="P:positive regulation of metabolic process"/>
    <property type="evidence" value="ECO:0007669"/>
    <property type="project" value="UniProtKB-ARBA"/>
</dbReference>
<dbReference type="GO" id="GO:0006355">
    <property type="term" value="P:regulation of DNA-templated transcription"/>
    <property type="evidence" value="ECO:0007669"/>
    <property type="project" value="UniProtKB-UniRule"/>
</dbReference>
<dbReference type="GO" id="GO:0006417">
    <property type="term" value="P:regulation of translation"/>
    <property type="evidence" value="ECO:0007669"/>
    <property type="project" value="UniProtKB-UniRule"/>
</dbReference>
<dbReference type="CDD" id="cd13835">
    <property type="entry name" value="IHF_A"/>
    <property type="match status" value="1"/>
</dbReference>
<dbReference type="FunFam" id="4.10.520.10:FF:000002">
    <property type="entry name" value="Integration host factor subunit alpha"/>
    <property type="match status" value="1"/>
</dbReference>
<dbReference type="Gene3D" id="4.10.520.10">
    <property type="entry name" value="IHF-like DNA-binding proteins"/>
    <property type="match status" value="1"/>
</dbReference>
<dbReference type="HAMAP" id="MF_00380">
    <property type="entry name" value="IHF_alpha"/>
    <property type="match status" value="1"/>
</dbReference>
<dbReference type="InterPro" id="IPR000119">
    <property type="entry name" value="Hist_DNA-bd"/>
</dbReference>
<dbReference type="InterPro" id="IPR020816">
    <property type="entry name" value="Histone-like_DNA-bd_CS"/>
</dbReference>
<dbReference type="InterPro" id="IPR010992">
    <property type="entry name" value="IHF-like_DNA-bd_dom_sf"/>
</dbReference>
<dbReference type="InterPro" id="IPR005684">
    <property type="entry name" value="IHF_alpha"/>
</dbReference>
<dbReference type="NCBIfam" id="TIGR00987">
    <property type="entry name" value="himA"/>
    <property type="match status" value="1"/>
</dbReference>
<dbReference type="NCBIfam" id="NF001401">
    <property type="entry name" value="PRK00285.1"/>
    <property type="match status" value="1"/>
</dbReference>
<dbReference type="PANTHER" id="PTHR33175">
    <property type="entry name" value="DNA-BINDING PROTEIN HU"/>
    <property type="match status" value="1"/>
</dbReference>
<dbReference type="PANTHER" id="PTHR33175:SF2">
    <property type="entry name" value="INTEGRATION HOST FACTOR SUBUNIT ALPHA"/>
    <property type="match status" value="1"/>
</dbReference>
<dbReference type="Pfam" id="PF00216">
    <property type="entry name" value="Bac_DNA_binding"/>
    <property type="match status" value="1"/>
</dbReference>
<dbReference type="PRINTS" id="PR01727">
    <property type="entry name" value="DNABINDINGHU"/>
</dbReference>
<dbReference type="SMART" id="SM00411">
    <property type="entry name" value="BHL"/>
    <property type="match status" value="1"/>
</dbReference>
<dbReference type="SUPFAM" id="SSF47729">
    <property type="entry name" value="IHF-like DNA-binding proteins"/>
    <property type="match status" value="1"/>
</dbReference>
<dbReference type="PROSITE" id="PS00045">
    <property type="entry name" value="HISTONE_LIKE"/>
    <property type="match status" value="1"/>
</dbReference>
<sequence length="99" mass="11354">MALTKAEMSEYLFDKLGLSKRDAKELVELFFEEIRRALENGEQVKLSGFGNFDLRDKNQRPGRNPKTGEDIPITARRVVTFRPGQKLKSRVENASPKDE</sequence>
<name>IHFA_ECO27</name>
<proteinExistence type="inferred from homology"/>
<comment type="function">
    <text evidence="1">This protein is one of the two subunits of integration host factor, a specific DNA-binding protein that functions in genetic recombination as well as in transcriptional and translational control.</text>
</comment>
<comment type="subunit">
    <text evidence="1">Heterodimer of an alpha and a beta chain.</text>
</comment>
<comment type="similarity">
    <text evidence="1">Belongs to the bacterial histone-like protein family.</text>
</comment>
<reference key="1">
    <citation type="journal article" date="2009" name="J. Bacteriol.">
        <title>Complete genome sequence and comparative genome analysis of enteropathogenic Escherichia coli O127:H6 strain E2348/69.</title>
        <authorList>
            <person name="Iguchi A."/>
            <person name="Thomson N.R."/>
            <person name="Ogura Y."/>
            <person name="Saunders D."/>
            <person name="Ooka T."/>
            <person name="Henderson I.R."/>
            <person name="Harris D."/>
            <person name="Asadulghani M."/>
            <person name="Kurokawa K."/>
            <person name="Dean P."/>
            <person name="Kenny B."/>
            <person name="Quail M.A."/>
            <person name="Thurston S."/>
            <person name="Dougan G."/>
            <person name="Hayashi T."/>
            <person name="Parkhill J."/>
            <person name="Frankel G."/>
        </authorList>
    </citation>
    <scope>NUCLEOTIDE SEQUENCE [LARGE SCALE GENOMIC DNA]</scope>
    <source>
        <strain>E2348/69 / EPEC</strain>
    </source>
</reference>
<keyword id="KW-0233">DNA recombination</keyword>
<keyword id="KW-0238">DNA-binding</keyword>
<keyword id="KW-1185">Reference proteome</keyword>
<keyword id="KW-0804">Transcription</keyword>
<keyword id="KW-0805">Transcription regulation</keyword>
<keyword id="KW-0810">Translation regulation</keyword>
<evidence type="ECO:0000255" key="1">
    <source>
        <dbReference type="HAMAP-Rule" id="MF_00380"/>
    </source>
</evidence>
<evidence type="ECO:0000256" key="2">
    <source>
        <dbReference type="SAM" id="MobiDB-lite"/>
    </source>
</evidence>